<reference key="1">
    <citation type="journal article" date="2008" name="J. Bacteriol.">
        <title>Genome of the actinomycete plant pathogen Clavibacter michiganensis subsp. sepedonicus suggests recent niche adaptation.</title>
        <authorList>
            <person name="Bentley S.D."/>
            <person name="Corton C."/>
            <person name="Brown S.E."/>
            <person name="Barron A."/>
            <person name="Clark L."/>
            <person name="Doggett J."/>
            <person name="Harris B."/>
            <person name="Ormond D."/>
            <person name="Quail M.A."/>
            <person name="May G."/>
            <person name="Francis D."/>
            <person name="Knudson D."/>
            <person name="Parkhill J."/>
            <person name="Ishimaru C.A."/>
        </authorList>
    </citation>
    <scope>NUCLEOTIDE SEQUENCE [LARGE SCALE GENOMIC DNA]</scope>
    <source>
        <strain>ATCC 33113 / DSM 20744 / JCM 9667 / LMG 2889 / ICMP 2535 / C-1</strain>
    </source>
</reference>
<accession>B0RB53</accession>
<dbReference type="EMBL" id="AM849034">
    <property type="protein sequence ID" value="CAQ00418.1"/>
    <property type="molecule type" value="Genomic_DNA"/>
</dbReference>
<dbReference type="RefSeq" id="WP_012297762.1">
    <property type="nucleotide sequence ID" value="NZ_MZMN01000003.1"/>
</dbReference>
<dbReference type="SMR" id="B0RB53"/>
<dbReference type="STRING" id="31964.CMS0297"/>
<dbReference type="KEGG" id="cms:CMS0297"/>
<dbReference type="eggNOG" id="COG0097">
    <property type="taxonomic scope" value="Bacteria"/>
</dbReference>
<dbReference type="HOGENOM" id="CLU_065464_1_2_11"/>
<dbReference type="OrthoDB" id="9805007at2"/>
<dbReference type="Proteomes" id="UP000001318">
    <property type="component" value="Chromosome"/>
</dbReference>
<dbReference type="GO" id="GO:0022625">
    <property type="term" value="C:cytosolic large ribosomal subunit"/>
    <property type="evidence" value="ECO:0007669"/>
    <property type="project" value="TreeGrafter"/>
</dbReference>
<dbReference type="GO" id="GO:0019843">
    <property type="term" value="F:rRNA binding"/>
    <property type="evidence" value="ECO:0007669"/>
    <property type="project" value="UniProtKB-UniRule"/>
</dbReference>
<dbReference type="GO" id="GO:0003735">
    <property type="term" value="F:structural constituent of ribosome"/>
    <property type="evidence" value="ECO:0007669"/>
    <property type="project" value="InterPro"/>
</dbReference>
<dbReference type="GO" id="GO:0002181">
    <property type="term" value="P:cytoplasmic translation"/>
    <property type="evidence" value="ECO:0007669"/>
    <property type="project" value="TreeGrafter"/>
</dbReference>
<dbReference type="FunFam" id="3.90.930.12:FF:000001">
    <property type="entry name" value="50S ribosomal protein L6"/>
    <property type="match status" value="1"/>
</dbReference>
<dbReference type="FunFam" id="3.90.930.12:FF:000002">
    <property type="entry name" value="50S ribosomal protein L6"/>
    <property type="match status" value="1"/>
</dbReference>
<dbReference type="Gene3D" id="3.90.930.12">
    <property type="entry name" value="Ribosomal protein L6, alpha-beta domain"/>
    <property type="match status" value="2"/>
</dbReference>
<dbReference type="HAMAP" id="MF_01365_B">
    <property type="entry name" value="Ribosomal_uL6_B"/>
    <property type="match status" value="1"/>
</dbReference>
<dbReference type="InterPro" id="IPR000702">
    <property type="entry name" value="Ribosomal_uL6-like"/>
</dbReference>
<dbReference type="InterPro" id="IPR036789">
    <property type="entry name" value="Ribosomal_uL6-like_a/b-dom_sf"/>
</dbReference>
<dbReference type="InterPro" id="IPR020040">
    <property type="entry name" value="Ribosomal_uL6_a/b-dom"/>
</dbReference>
<dbReference type="InterPro" id="IPR019906">
    <property type="entry name" value="Ribosomal_uL6_bac-type"/>
</dbReference>
<dbReference type="InterPro" id="IPR002358">
    <property type="entry name" value="Ribosomal_uL6_CS"/>
</dbReference>
<dbReference type="NCBIfam" id="TIGR03654">
    <property type="entry name" value="L6_bact"/>
    <property type="match status" value="1"/>
</dbReference>
<dbReference type="PANTHER" id="PTHR11655">
    <property type="entry name" value="60S/50S RIBOSOMAL PROTEIN L6/L9"/>
    <property type="match status" value="1"/>
</dbReference>
<dbReference type="PANTHER" id="PTHR11655:SF14">
    <property type="entry name" value="LARGE RIBOSOMAL SUBUNIT PROTEIN UL6M"/>
    <property type="match status" value="1"/>
</dbReference>
<dbReference type="Pfam" id="PF00347">
    <property type="entry name" value="Ribosomal_L6"/>
    <property type="match status" value="2"/>
</dbReference>
<dbReference type="PIRSF" id="PIRSF002162">
    <property type="entry name" value="Ribosomal_L6"/>
    <property type="match status" value="1"/>
</dbReference>
<dbReference type="PRINTS" id="PR00059">
    <property type="entry name" value="RIBOSOMALL6"/>
</dbReference>
<dbReference type="SUPFAM" id="SSF56053">
    <property type="entry name" value="Ribosomal protein L6"/>
    <property type="match status" value="2"/>
</dbReference>
<dbReference type="PROSITE" id="PS00525">
    <property type="entry name" value="RIBOSOMAL_L6_1"/>
    <property type="match status" value="1"/>
</dbReference>
<feature type="chain" id="PRO_1000087034" description="Large ribosomal subunit protein uL6">
    <location>
        <begin position="1"/>
        <end position="178"/>
    </location>
</feature>
<keyword id="KW-0687">Ribonucleoprotein</keyword>
<keyword id="KW-0689">Ribosomal protein</keyword>
<keyword id="KW-0694">RNA-binding</keyword>
<keyword id="KW-0699">rRNA-binding</keyword>
<sequence length="178" mass="19031">MSRIGRLPIDVPAGVDVSVDGQHVTVKGPKGELSLTIAQPIRAEVQDGQVLVTRPDDERESRSLHGLTRSLIANNIVGVTTGYTKGLEIVGTGYRVALKDKGVEFALGFSHPVYVEAPAGISFTVEGVNKMTVVGIDKQLVGETAANIRKIRKPEPYKGKGVRYAGENVRRKAGKSGK</sequence>
<proteinExistence type="inferred from homology"/>
<name>RL6_CLASE</name>
<organism>
    <name type="scientific">Clavibacter sepedonicus</name>
    <name type="common">Clavibacter michiganensis subsp. sepedonicus</name>
    <dbReference type="NCBI Taxonomy" id="31964"/>
    <lineage>
        <taxon>Bacteria</taxon>
        <taxon>Bacillati</taxon>
        <taxon>Actinomycetota</taxon>
        <taxon>Actinomycetes</taxon>
        <taxon>Micrococcales</taxon>
        <taxon>Microbacteriaceae</taxon>
        <taxon>Clavibacter</taxon>
    </lineage>
</organism>
<evidence type="ECO:0000255" key="1">
    <source>
        <dbReference type="HAMAP-Rule" id="MF_01365"/>
    </source>
</evidence>
<evidence type="ECO:0000305" key="2"/>
<comment type="function">
    <text evidence="1">This protein binds to the 23S rRNA, and is important in its secondary structure. It is located near the subunit interface in the base of the L7/L12 stalk, and near the tRNA binding site of the peptidyltransferase center.</text>
</comment>
<comment type="subunit">
    <text evidence="1">Part of the 50S ribosomal subunit.</text>
</comment>
<comment type="similarity">
    <text evidence="1">Belongs to the universal ribosomal protein uL6 family.</text>
</comment>
<gene>
    <name evidence="1" type="primary">rplF</name>
    <name type="ordered locus">CMS0297</name>
</gene>
<protein>
    <recommendedName>
        <fullName evidence="1">Large ribosomal subunit protein uL6</fullName>
    </recommendedName>
    <alternativeName>
        <fullName evidence="2">50S ribosomal protein L6</fullName>
    </alternativeName>
</protein>